<sequence>MVINIFYICTGEYKRFFDKFYLSCEDKFIPEFGKKYYVFTDSDRIYFSKYLNVEVINVEKNCWPLNTLLRFSYFLKVIDKLQTNSYTFFFNANAVIVKEIPFSTFMESDLIGVIHPGYKNRISILYPWERRKNATCYLGYLKKGIYYQGCFNGGKTASFKRLIQICNMMTMADLKKNLIAKVHDESYLNYYYYYNKPLLLSELYSWPEKYGENKDAKIIMRDKERESWYGNIKK</sequence>
<gene>
    <name evidence="5" type="primary">wbnI</name>
    <name evidence="7" type="synonym">wbwI</name>
    <name evidence="6" type="synonym">wcmB</name>
</gene>
<protein>
    <recommendedName>
        <fullName evidence="8">O-antigen biosynthesis glycosyltransferase WbnI</fullName>
        <ecNumber evidence="2 4">2.4.1.309</ecNumber>
    </recommendedName>
    <alternativeName>
        <fullName evidence="8">UDP-Gal:alpha-L-Fuc-1,2-beta-Gal-1,3-alpha-GalNAc-1,3-alpha-GalNAc-diphosphoundecaprenol alpha-1,3-galactosyltransferase</fullName>
    </alternativeName>
</protein>
<reference key="1">
    <citation type="journal article" date="2005" name="Appl. Environ. Microbiol.">
        <title>Molecular analysis of the O-antigen gene cluster of Escherichia coli O86:B7 and characterization of the chain length determinant gene (wzz).</title>
        <authorList>
            <person name="Guo H."/>
            <person name="Yi W."/>
            <person name="Shao J."/>
            <person name="Lu Y."/>
            <person name="Zhang W."/>
            <person name="Song J."/>
            <person name="Wang P.G."/>
        </authorList>
    </citation>
    <scope>NUCLEOTIDE SEQUENCE [GENOMIC DNA]</scope>
    <source>
        <strain>O86:K61:B7 / ATCC 12701</strain>
    </source>
</reference>
<reference key="2">
    <citation type="journal article" date="2005" name="J. Am. Chem. Soc.">
        <title>Escherichia coli O86 O-antigen biosynthetic gene cluster and stepwise enzymatic synthesis of human blood group B antigen tetrasaccharide.</title>
        <authorList>
            <person name="Yi W."/>
            <person name="Shao J."/>
            <person name="Zhu L."/>
            <person name="Li M."/>
            <person name="Singh M."/>
            <person name="Lu Y."/>
            <person name="Lin S."/>
            <person name="Li H."/>
            <person name="Ryu K."/>
            <person name="Shen J."/>
            <person name="Guo H."/>
            <person name="Yao Q."/>
            <person name="Bush C.A."/>
            <person name="Wang P.G."/>
        </authorList>
    </citation>
    <scope>NUCLEOTIDE SEQUENCE [GENOMIC DNA]</scope>
    <scope>FUNCTION</scope>
    <scope>CATALYTIC ACTIVITY</scope>
    <scope>PATHWAY</scope>
    <source>
        <strain>O86:K62:H2</strain>
    </source>
</reference>
<reference key="3">
    <citation type="journal article" date="2005" name="Vet. Microbiol.">
        <title>Characterization of Escherichia coli O86 O-antigen gene cluster and identification of O86-specific genes.</title>
        <authorList>
            <person name="Feng L."/>
            <person name="Han W."/>
            <person name="Wang Q."/>
            <person name="Bastin D.A."/>
            <person name="Wang L."/>
        </authorList>
    </citation>
    <scope>NUCLEOTIDE SEQUENCE [GENOMIC DNA]</scope>
    <source>
        <strain>O86</strain>
    </source>
</reference>
<reference key="4">
    <citation type="journal article" date="2010" name="Nat. Chem. Biol.">
        <title>In vitro bacterial polysaccharide biosynthesis: defining the functions of Wzy and Wzz.</title>
        <authorList>
            <person name="Woodward R."/>
            <person name="Yi W."/>
            <person name="Li L."/>
            <person name="Zhao G."/>
            <person name="Eguchi H."/>
            <person name="Sridhar P.R."/>
            <person name="Guo H."/>
            <person name="Song J.K."/>
            <person name="Motari E."/>
            <person name="Cai L."/>
            <person name="Kelleher P."/>
            <person name="Liu X."/>
            <person name="Han W."/>
            <person name="Zhang W."/>
            <person name="Ding Y."/>
            <person name="Li M."/>
            <person name="Wang P.G."/>
        </authorList>
    </citation>
    <scope>FUNCTION</scope>
    <scope>CATALYTIC ACTIVITY</scope>
    <scope>PATHWAY</scope>
    <source>
        <strain>O86:K61:B7 / ATCC 12701</strain>
    </source>
</reference>
<proteinExistence type="evidence at protein level"/>
<comment type="function">
    <text evidence="2 4">Involved in the assembly of the O-repeating unit during O-antigen biosynthesis.</text>
</comment>
<comment type="catalytic activity">
    <reaction evidence="2 4">
        <text>alpha-L-Fuc-(1-&gt;2)-beta-D-Gal-(1-&gt;3)-alpha-D-GalNAc-(1-&gt;3)-alpha-D-GalNAc-di-trans,octa-cis-undecaprenyl diphosphate + UDP-alpha-D-galactose = alpha-L-Fuc-(1-&gt;2)-[alpha-D-Gal-(1-&gt;3)]-beta-D-Gal-(1-&gt;3)-alpha-D-GalNAc-(1-&gt;3)-alpha-D-GalNAc-di-trans,octa-cis-undecaprenyl diphosphate + UDP + H(+)</text>
        <dbReference type="Rhea" id="RHEA:36775"/>
        <dbReference type="ChEBI" id="CHEBI:15378"/>
        <dbReference type="ChEBI" id="CHEBI:58223"/>
        <dbReference type="ChEBI" id="CHEBI:66914"/>
        <dbReference type="ChEBI" id="CHEBI:73991"/>
        <dbReference type="ChEBI" id="CHEBI:73993"/>
        <dbReference type="EC" id="2.4.1.309"/>
    </reaction>
</comment>
<comment type="cofactor">
    <cofactor evidence="1">
        <name>Mn(2+)</name>
        <dbReference type="ChEBI" id="CHEBI:29035"/>
    </cofactor>
    <text evidence="1">Binds 1 Mn(2+) ion per subunit.</text>
</comment>
<comment type="pathway">
    <text evidence="2 4">Bacterial outer membrane biogenesis; LPS O-antigen biosynthesis.</text>
</comment>
<comment type="miscellaneous">
    <text evidence="3">O86:H2 and O86:B7 subtypes share the same O unit, but the O units are polymerized from different terminal sugars in different glycosidic linkages.</text>
</comment>
<comment type="similarity">
    <text evidence="8">Belongs to the glycosyltransferase 6 family.</text>
</comment>
<dbReference type="EC" id="2.4.1.309" evidence="2 4"/>
<dbReference type="EMBL" id="AY220982">
    <property type="protein sequence ID" value="AAO37716.1"/>
    <property type="molecule type" value="Genomic_DNA"/>
</dbReference>
<dbReference type="EMBL" id="AY667408">
    <property type="protein sequence ID" value="AAV80756.1"/>
    <property type="molecule type" value="Genomic_DNA"/>
</dbReference>
<dbReference type="EMBL" id="AY670704">
    <property type="protein sequence ID" value="AAV85960.1"/>
    <property type="molecule type" value="Genomic_DNA"/>
</dbReference>
<dbReference type="SMR" id="Q5JBG6"/>
<dbReference type="CAZy" id="GT6">
    <property type="family name" value="Glycosyltransferase Family 6"/>
</dbReference>
<dbReference type="KEGG" id="ag:AAV80756"/>
<dbReference type="BioCyc" id="MetaCyc:MONOMER-18060"/>
<dbReference type="BRENDA" id="2.4.1.309">
    <property type="organism ID" value="2026"/>
</dbReference>
<dbReference type="UniPathway" id="UPA00281"/>
<dbReference type="GO" id="GO:0016020">
    <property type="term" value="C:membrane"/>
    <property type="evidence" value="ECO:0007669"/>
    <property type="project" value="InterPro"/>
</dbReference>
<dbReference type="GO" id="GO:0016758">
    <property type="term" value="F:hexosyltransferase activity"/>
    <property type="evidence" value="ECO:0007669"/>
    <property type="project" value="InterPro"/>
</dbReference>
<dbReference type="GO" id="GO:0009243">
    <property type="term" value="P:O antigen biosynthetic process"/>
    <property type="evidence" value="ECO:0007669"/>
    <property type="project" value="UniProtKB-UniPathway"/>
</dbReference>
<dbReference type="Gene3D" id="3.90.550.10">
    <property type="entry name" value="Spore Coat Polysaccharide Biosynthesis Protein SpsA, Chain A"/>
    <property type="match status" value="1"/>
</dbReference>
<dbReference type="InterPro" id="IPR005076">
    <property type="entry name" value="Glyco_trans_6"/>
</dbReference>
<dbReference type="InterPro" id="IPR029044">
    <property type="entry name" value="Nucleotide-diphossugar_trans"/>
</dbReference>
<dbReference type="InterPro" id="IPR048174">
    <property type="entry name" value="WbnI-like"/>
</dbReference>
<dbReference type="NCBIfam" id="NF041524">
    <property type="entry name" value="Gltr_6"/>
    <property type="match status" value="1"/>
</dbReference>
<dbReference type="PANTHER" id="PTHR10462">
    <property type="entry name" value="GLYCOSYLTRANSFERASE-RELATED"/>
    <property type="match status" value="1"/>
</dbReference>
<dbReference type="PANTHER" id="PTHR10462:SF53">
    <property type="entry name" value="HISTO-BLOOD GROUP ABO SYSTEM TRANSFERASE 1-LIKE"/>
    <property type="match status" value="1"/>
</dbReference>
<dbReference type="Pfam" id="PF03414">
    <property type="entry name" value="Glyco_transf_6"/>
    <property type="match status" value="1"/>
</dbReference>
<dbReference type="SUPFAM" id="SSF53448">
    <property type="entry name" value="Nucleotide-diphospho-sugar transferases"/>
    <property type="match status" value="1"/>
</dbReference>
<organism>
    <name type="scientific">Escherichia coli</name>
    <dbReference type="NCBI Taxonomy" id="562"/>
    <lineage>
        <taxon>Bacteria</taxon>
        <taxon>Pseudomonadati</taxon>
        <taxon>Pseudomonadota</taxon>
        <taxon>Gammaproteobacteria</taxon>
        <taxon>Enterobacterales</taxon>
        <taxon>Enterobacteriaceae</taxon>
        <taxon>Escherichia</taxon>
    </lineage>
</organism>
<feature type="chain" id="PRO_0000430651" description="O-antigen biosynthesis glycosyltransferase WbnI">
    <location>
        <begin position="1"/>
        <end position="234"/>
    </location>
</feature>
<feature type="active site" description="Nucleophile" evidence="1">
    <location>
        <position position="185"/>
    </location>
</feature>
<feature type="binding site" evidence="1">
    <location>
        <begin position="8"/>
        <end position="13"/>
    </location>
    <ligand>
        <name>substrate</name>
    </ligand>
</feature>
<feature type="binding site" evidence="1">
    <location>
        <begin position="93"/>
        <end position="95"/>
    </location>
    <ligand>
        <name>substrate</name>
    </ligand>
</feature>
<feature type="binding site" evidence="1">
    <location>
        <begin position="115"/>
        <end position="118"/>
    </location>
    <ligand>
        <name>substrate</name>
    </ligand>
</feature>
<feature type="sequence conflict" description="In Ref. 3; AAV85960." evidence="8" ref="3">
    <original>G</original>
    <variation>E</variation>
    <location>
        <position position="33"/>
    </location>
</feature>
<name>WBNI_ECOLX</name>
<accession>Q5JBG6</accession>
<accession>Q58YW2</accession>
<keyword id="KW-0328">Glycosyltransferase</keyword>
<keyword id="KW-0448">Lipopolysaccharide biosynthesis</keyword>
<keyword id="KW-0808">Transferase</keyword>
<evidence type="ECO:0000250" key="1">
    <source>
        <dbReference type="UniProtKB" id="P14769"/>
    </source>
</evidence>
<evidence type="ECO:0000269" key="2">
    <source>
    </source>
</evidence>
<evidence type="ECO:0000269" key="3">
    <source>
    </source>
</evidence>
<evidence type="ECO:0000269" key="4">
    <source>
    </source>
</evidence>
<evidence type="ECO:0000303" key="5">
    <source>
    </source>
</evidence>
<evidence type="ECO:0000303" key="6">
    <source>
    </source>
</evidence>
<evidence type="ECO:0000303" key="7">
    <source>
    </source>
</evidence>
<evidence type="ECO:0000305" key="8"/>